<reference key="1">
    <citation type="journal article" date="2002" name="Proc. Natl. Acad. Sci. U.S.A.">
        <title>Extensive mosaic structure revealed by the complete genome sequence of uropathogenic Escherichia coli.</title>
        <authorList>
            <person name="Welch R.A."/>
            <person name="Burland V."/>
            <person name="Plunkett G. III"/>
            <person name="Redford P."/>
            <person name="Roesch P."/>
            <person name="Rasko D."/>
            <person name="Buckles E.L."/>
            <person name="Liou S.-R."/>
            <person name="Boutin A."/>
            <person name="Hackett J."/>
            <person name="Stroud D."/>
            <person name="Mayhew G.F."/>
            <person name="Rose D.J."/>
            <person name="Zhou S."/>
            <person name="Schwartz D.C."/>
            <person name="Perna N.T."/>
            <person name="Mobley H.L.T."/>
            <person name="Donnenberg M.S."/>
            <person name="Blattner F.R."/>
        </authorList>
    </citation>
    <scope>NUCLEOTIDE SEQUENCE [LARGE SCALE GENOMIC DNA]</scope>
    <source>
        <strain>CFT073 / ATCC 700928 / UPEC</strain>
    </source>
</reference>
<sequence length="328" mass="35171">MSHVELQPGFDFQQAGKEVLAIERECLAELDQYINQNFTLACEKMFWCKGKVVVMGMGKSGHIGRKMAATFASTGTPSFFVHPGEAAHGDLGMVTPQDVVIAISNSGESSEITALIPVLKRLHVPLICITGCPESSMARAADVHLCVKVAKEACPLGLAPTSSTTATLVMGDALAVALLKARGFTAEDFALSHPGGALGRKLLLRVNDIMHTGDEIPHVKKTASLRDALLEVTRKNLGMTVICDDNMMIEGIFTDGDLRRVFDMGVDVRRLSIADVMTPGGIRVRPGILAVEALNLMQSRHITSVMVADGDHLLGVLHMHDLLRAGVV</sequence>
<proteinExistence type="inferred from homology"/>
<organism>
    <name type="scientific">Escherichia coli O6:H1 (strain CFT073 / ATCC 700928 / UPEC)</name>
    <dbReference type="NCBI Taxonomy" id="199310"/>
    <lineage>
        <taxon>Bacteria</taxon>
        <taxon>Pseudomonadati</taxon>
        <taxon>Pseudomonadota</taxon>
        <taxon>Gammaproteobacteria</taxon>
        <taxon>Enterobacterales</taxon>
        <taxon>Enterobacteriaceae</taxon>
        <taxon>Escherichia</taxon>
    </lineage>
</organism>
<keyword id="KW-0119">Carbohydrate metabolism</keyword>
<keyword id="KW-0129">CBS domain</keyword>
<keyword id="KW-0413">Isomerase</keyword>
<keyword id="KW-0448">Lipopolysaccharide biosynthesis</keyword>
<keyword id="KW-0479">Metal-binding</keyword>
<keyword id="KW-1185">Reference proteome</keyword>
<keyword id="KW-0677">Repeat</keyword>
<keyword id="KW-0862">Zinc</keyword>
<protein>
    <recommendedName>
        <fullName>Arabinose 5-phosphate isomerase KdsD</fullName>
        <shortName>API</shortName>
        <shortName>L-API</shortName>
        <ecNumber>5.3.1.13</ecNumber>
    </recommendedName>
</protein>
<feature type="chain" id="PRO_0000136577" description="Arabinose 5-phosphate isomerase KdsD">
    <location>
        <begin position="1"/>
        <end position="328"/>
    </location>
</feature>
<feature type="domain" description="SIS" evidence="3">
    <location>
        <begin position="42"/>
        <end position="184"/>
    </location>
</feature>
<feature type="domain" description="CBS 1" evidence="2">
    <location>
        <begin position="210"/>
        <end position="268"/>
    </location>
</feature>
<feature type="domain" description="CBS 2" evidence="2">
    <location>
        <begin position="277"/>
        <end position="328"/>
    </location>
</feature>
<feature type="binding site" evidence="1">
    <location>
        <begin position="75"/>
        <end position="76"/>
    </location>
    <ligand>
        <name>substrate</name>
    </ligand>
</feature>
<feature type="binding site" evidence="1">
    <location>
        <position position="82"/>
    </location>
    <ligand>
        <name>substrate</name>
    </ligand>
</feature>
<feature type="binding site" evidence="1">
    <location>
        <position position="82"/>
    </location>
    <ligand>
        <name>Zn(2+)</name>
        <dbReference type="ChEBI" id="CHEBI:29105"/>
    </ligand>
</feature>
<feature type="binding site" evidence="1">
    <location>
        <position position="88"/>
    </location>
    <ligand>
        <name>substrate</name>
    </ligand>
</feature>
<feature type="binding site" evidence="1">
    <location>
        <begin position="114"/>
        <end position="123"/>
    </location>
    <ligand>
        <name>substrate</name>
    </ligand>
</feature>
<feature type="binding site" evidence="1">
    <location>
        <begin position="148"/>
        <end position="150"/>
    </location>
    <ligand>
        <name>substrate</name>
    </ligand>
</feature>
<feature type="binding site" evidence="1">
    <location>
        <position position="222"/>
    </location>
    <ligand>
        <name>substrate</name>
    </ligand>
</feature>
<feature type="binding site" evidence="1">
    <location>
        <position position="275"/>
    </location>
    <ligand>
        <name>substrate</name>
    </ligand>
</feature>
<feature type="site" description="Catalytically relevant" evidence="1">
    <location>
        <position position="59"/>
    </location>
</feature>
<feature type="site" description="Catalytically relevant" evidence="1">
    <location>
        <position position="111"/>
    </location>
</feature>
<feature type="site" description="Catalytically relevant" evidence="1">
    <location>
        <position position="152"/>
    </location>
</feature>
<feature type="site" description="Catalytically relevant" evidence="1">
    <location>
        <position position="193"/>
    </location>
</feature>
<dbReference type="EC" id="5.3.1.13"/>
<dbReference type="EMBL" id="AE014075">
    <property type="protein sequence ID" value="AAN82397.1"/>
    <property type="status" value="ALT_INIT"/>
    <property type="molecule type" value="Genomic_DNA"/>
</dbReference>
<dbReference type="RefSeq" id="WP_001305135.1">
    <property type="nucleotide sequence ID" value="NZ_CP051263.1"/>
</dbReference>
<dbReference type="SMR" id="Q8FD73"/>
<dbReference type="STRING" id="199310.c3957"/>
<dbReference type="DNASU" id="1040318"/>
<dbReference type="KEGG" id="ecc:c3957"/>
<dbReference type="eggNOG" id="COG0517">
    <property type="taxonomic scope" value="Bacteria"/>
</dbReference>
<dbReference type="eggNOG" id="COG0794">
    <property type="taxonomic scope" value="Bacteria"/>
</dbReference>
<dbReference type="HOGENOM" id="CLU_040681_13_1_6"/>
<dbReference type="UniPathway" id="UPA00030"/>
<dbReference type="UniPathway" id="UPA00357">
    <property type="reaction ID" value="UER00473"/>
</dbReference>
<dbReference type="Proteomes" id="UP000001410">
    <property type="component" value="Chromosome"/>
</dbReference>
<dbReference type="GO" id="GO:0019146">
    <property type="term" value="F:arabinose-5-phosphate isomerase activity"/>
    <property type="evidence" value="ECO:0007669"/>
    <property type="project" value="UniProtKB-EC"/>
</dbReference>
<dbReference type="GO" id="GO:0097367">
    <property type="term" value="F:carbohydrate derivative binding"/>
    <property type="evidence" value="ECO:0007669"/>
    <property type="project" value="InterPro"/>
</dbReference>
<dbReference type="GO" id="GO:0046872">
    <property type="term" value="F:metal ion binding"/>
    <property type="evidence" value="ECO:0007669"/>
    <property type="project" value="UniProtKB-KW"/>
</dbReference>
<dbReference type="GO" id="GO:0009103">
    <property type="term" value="P:lipopolysaccharide biosynthetic process"/>
    <property type="evidence" value="ECO:0007669"/>
    <property type="project" value="UniProtKB-UniPathway"/>
</dbReference>
<dbReference type="CDD" id="cd04604">
    <property type="entry name" value="CBS_pair_SIS_assoc"/>
    <property type="match status" value="1"/>
</dbReference>
<dbReference type="CDD" id="cd05014">
    <property type="entry name" value="SIS_Kpsf"/>
    <property type="match status" value="1"/>
</dbReference>
<dbReference type="FunFam" id="3.10.580.10:FF:000007">
    <property type="entry name" value="Arabinose 5-phosphate isomerase"/>
    <property type="match status" value="1"/>
</dbReference>
<dbReference type="FunFam" id="3.40.50.10490:FF:000011">
    <property type="entry name" value="Arabinose 5-phosphate isomerase"/>
    <property type="match status" value="1"/>
</dbReference>
<dbReference type="Gene3D" id="3.10.580.10">
    <property type="entry name" value="CBS-domain"/>
    <property type="match status" value="1"/>
</dbReference>
<dbReference type="Gene3D" id="3.40.50.10490">
    <property type="entry name" value="Glucose-6-phosphate isomerase like protein, domain 1"/>
    <property type="match status" value="1"/>
</dbReference>
<dbReference type="InterPro" id="IPR000644">
    <property type="entry name" value="CBS_dom"/>
</dbReference>
<dbReference type="InterPro" id="IPR046342">
    <property type="entry name" value="CBS_dom_sf"/>
</dbReference>
<dbReference type="InterPro" id="IPR050986">
    <property type="entry name" value="GutQ/KpsF_isomerases"/>
</dbReference>
<dbReference type="InterPro" id="IPR004800">
    <property type="entry name" value="KdsD/KpsF-type"/>
</dbReference>
<dbReference type="InterPro" id="IPR001347">
    <property type="entry name" value="SIS_dom"/>
</dbReference>
<dbReference type="InterPro" id="IPR046348">
    <property type="entry name" value="SIS_dom_sf"/>
</dbReference>
<dbReference type="InterPro" id="IPR035474">
    <property type="entry name" value="SIS_Kpsf"/>
</dbReference>
<dbReference type="NCBIfam" id="TIGR00393">
    <property type="entry name" value="kpsF"/>
    <property type="match status" value="1"/>
</dbReference>
<dbReference type="NCBIfam" id="NF008141">
    <property type="entry name" value="PRK10892.1"/>
    <property type="match status" value="1"/>
</dbReference>
<dbReference type="PANTHER" id="PTHR42745">
    <property type="match status" value="1"/>
</dbReference>
<dbReference type="PANTHER" id="PTHR42745:SF1">
    <property type="entry name" value="ARABINOSE 5-PHOSPHATE ISOMERASE KDSD"/>
    <property type="match status" value="1"/>
</dbReference>
<dbReference type="Pfam" id="PF00571">
    <property type="entry name" value="CBS"/>
    <property type="match status" value="2"/>
</dbReference>
<dbReference type="Pfam" id="PF01380">
    <property type="entry name" value="SIS"/>
    <property type="match status" value="1"/>
</dbReference>
<dbReference type="PIRSF" id="PIRSF004692">
    <property type="entry name" value="KdsD_KpsF"/>
    <property type="match status" value="1"/>
</dbReference>
<dbReference type="SUPFAM" id="SSF53697">
    <property type="entry name" value="SIS domain"/>
    <property type="match status" value="1"/>
</dbReference>
<dbReference type="PROSITE" id="PS51371">
    <property type="entry name" value="CBS"/>
    <property type="match status" value="2"/>
</dbReference>
<dbReference type="PROSITE" id="PS51464">
    <property type="entry name" value="SIS"/>
    <property type="match status" value="1"/>
</dbReference>
<name>KDSD_ECOL6</name>
<gene>
    <name type="primary">kdsD</name>
    <name type="ordered locus">c3957</name>
</gene>
<evidence type="ECO:0000250" key="1"/>
<evidence type="ECO:0000255" key="2">
    <source>
        <dbReference type="PROSITE-ProRule" id="PRU00703"/>
    </source>
</evidence>
<evidence type="ECO:0000255" key="3">
    <source>
        <dbReference type="PROSITE-ProRule" id="PRU00797"/>
    </source>
</evidence>
<evidence type="ECO:0000305" key="4"/>
<comment type="function">
    <text evidence="1">Involved in the biosynthesis of 3-deoxy-D-manno-octulosonate (KDO), a unique 8-carbon sugar component of lipopolysaccharides (LPSs). Catalyzes the reversible aldol-ketol isomerization between D-ribulose 5-phosphate (Ru5P) and D-arabinose 5-phosphate (A5P) (By similarity).</text>
</comment>
<comment type="catalytic activity">
    <reaction>
        <text>D-arabinose 5-phosphate = D-ribulose 5-phosphate</text>
        <dbReference type="Rhea" id="RHEA:23104"/>
        <dbReference type="ChEBI" id="CHEBI:57693"/>
        <dbReference type="ChEBI" id="CHEBI:58121"/>
        <dbReference type="EC" id="5.3.1.13"/>
    </reaction>
</comment>
<comment type="pathway">
    <text>Carbohydrate biosynthesis; 3-deoxy-D-manno-octulosonate biosynthesis; 3-deoxy-D-manno-octulosonate from D-ribulose 5-phosphate: step 1/3.</text>
</comment>
<comment type="pathway">
    <text>Bacterial outer membrane biogenesis; lipopolysaccharide biosynthesis.</text>
</comment>
<comment type="subunit">
    <text evidence="1">Homotetramer.</text>
</comment>
<comment type="similarity">
    <text evidence="4">Belongs to the SIS family. GutQ/KpsF subfamily.</text>
</comment>
<comment type="sequence caution" evidence="4">
    <conflict type="erroneous initiation">
        <sequence resource="EMBL-CDS" id="AAN82397"/>
    </conflict>
    <text>Extended N-terminus.</text>
</comment>
<accession>Q8FD73</accession>